<dbReference type="EC" id="2.1.1.228" evidence="1"/>
<dbReference type="EMBL" id="CP001079">
    <property type="protein sequence ID" value="ACM49777.1"/>
    <property type="molecule type" value="Genomic_DNA"/>
</dbReference>
<dbReference type="RefSeq" id="WP_010268948.1">
    <property type="nucleotide sequence ID" value="NZ_AFMS01000151.1"/>
</dbReference>
<dbReference type="SMR" id="B9KH73"/>
<dbReference type="STRING" id="320483.AMF_958"/>
<dbReference type="GeneID" id="7398546"/>
<dbReference type="KEGG" id="amf:AMF_958"/>
<dbReference type="PATRIC" id="fig|320483.3.peg.1100"/>
<dbReference type="eggNOG" id="COG0336">
    <property type="taxonomic scope" value="Bacteria"/>
</dbReference>
<dbReference type="HOGENOM" id="CLU_047363_0_1_5"/>
<dbReference type="Proteomes" id="UP000007307">
    <property type="component" value="Chromosome"/>
</dbReference>
<dbReference type="GO" id="GO:0005829">
    <property type="term" value="C:cytosol"/>
    <property type="evidence" value="ECO:0007669"/>
    <property type="project" value="TreeGrafter"/>
</dbReference>
<dbReference type="GO" id="GO:0052906">
    <property type="term" value="F:tRNA (guanine(37)-N1)-methyltransferase activity"/>
    <property type="evidence" value="ECO:0007669"/>
    <property type="project" value="UniProtKB-UniRule"/>
</dbReference>
<dbReference type="GO" id="GO:0002939">
    <property type="term" value="P:tRNA N1-guanine methylation"/>
    <property type="evidence" value="ECO:0007669"/>
    <property type="project" value="TreeGrafter"/>
</dbReference>
<dbReference type="CDD" id="cd18080">
    <property type="entry name" value="TrmD-like"/>
    <property type="match status" value="1"/>
</dbReference>
<dbReference type="FunFam" id="3.40.1280.10:FF:000001">
    <property type="entry name" value="tRNA (guanine-N(1)-)-methyltransferase"/>
    <property type="match status" value="1"/>
</dbReference>
<dbReference type="Gene3D" id="3.40.1280.10">
    <property type="match status" value="1"/>
</dbReference>
<dbReference type="Gene3D" id="1.10.1270.20">
    <property type="entry name" value="tRNA(m1g37)methyltransferase, domain 2"/>
    <property type="match status" value="1"/>
</dbReference>
<dbReference type="HAMAP" id="MF_00605">
    <property type="entry name" value="TrmD"/>
    <property type="match status" value="1"/>
</dbReference>
<dbReference type="InterPro" id="IPR029028">
    <property type="entry name" value="Alpha/beta_knot_MTases"/>
</dbReference>
<dbReference type="InterPro" id="IPR023148">
    <property type="entry name" value="tRNA_m1G_MeTrfase_C_sf"/>
</dbReference>
<dbReference type="InterPro" id="IPR002649">
    <property type="entry name" value="tRNA_m1G_MeTrfase_TrmD"/>
</dbReference>
<dbReference type="InterPro" id="IPR029026">
    <property type="entry name" value="tRNA_m1G_MTases_N"/>
</dbReference>
<dbReference type="InterPro" id="IPR016009">
    <property type="entry name" value="tRNA_MeTrfase_TRMD/TRM10"/>
</dbReference>
<dbReference type="NCBIfam" id="NF000648">
    <property type="entry name" value="PRK00026.1"/>
    <property type="match status" value="1"/>
</dbReference>
<dbReference type="NCBIfam" id="TIGR00088">
    <property type="entry name" value="trmD"/>
    <property type="match status" value="1"/>
</dbReference>
<dbReference type="PANTHER" id="PTHR46417">
    <property type="entry name" value="TRNA (GUANINE-N(1)-)-METHYLTRANSFERASE"/>
    <property type="match status" value="1"/>
</dbReference>
<dbReference type="PANTHER" id="PTHR46417:SF1">
    <property type="entry name" value="TRNA (GUANINE-N(1)-)-METHYLTRANSFERASE"/>
    <property type="match status" value="1"/>
</dbReference>
<dbReference type="Pfam" id="PF01746">
    <property type="entry name" value="tRNA_m1G_MT"/>
    <property type="match status" value="1"/>
</dbReference>
<dbReference type="PIRSF" id="PIRSF000386">
    <property type="entry name" value="tRNA_mtase"/>
    <property type="match status" value="1"/>
</dbReference>
<dbReference type="SUPFAM" id="SSF75217">
    <property type="entry name" value="alpha/beta knot"/>
    <property type="match status" value="1"/>
</dbReference>
<evidence type="ECO:0000255" key="1">
    <source>
        <dbReference type="HAMAP-Rule" id="MF_00605"/>
    </source>
</evidence>
<comment type="function">
    <text evidence="1">Specifically methylates guanosine-37 in various tRNAs.</text>
</comment>
<comment type="catalytic activity">
    <reaction evidence="1">
        <text>guanosine(37) in tRNA + S-adenosyl-L-methionine = N(1)-methylguanosine(37) in tRNA + S-adenosyl-L-homocysteine + H(+)</text>
        <dbReference type="Rhea" id="RHEA:36899"/>
        <dbReference type="Rhea" id="RHEA-COMP:10145"/>
        <dbReference type="Rhea" id="RHEA-COMP:10147"/>
        <dbReference type="ChEBI" id="CHEBI:15378"/>
        <dbReference type="ChEBI" id="CHEBI:57856"/>
        <dbReference type="ChEBI" id="CHEBI:59789"/>
        <dbReference type="ChEBI" id="CHEBI:73542"/>
        <dbReference type="ChEBI" id="CHEBI:74269"/>
        <dbReference type="EC" id="2.1.1.228"/>
    </reaction>
</comment>
<comment type="subunit">
    <text evidence="1">Homodimer.</text>
</comment>
<comment type="subcellular location">
    <subcellularLocation>
        <location evidence="1">Cytoplasm</location>
    </subcellularLocation>
</comment>
<comment type="similarity">
    <text evidence="1">Belongs to the RNA methyltransferase TrmD family.</text>
</comment>
<feature type="chain" id="PRO_1000147067" description="tRNA (guanine-N(1)-)-methyltransferase">
    <location>
        <begin position="1"/>
        <end position="235"/>
    </location>
</feature>
<feature type="binding site" evidence="1">
    <location>
        <position position="112"/>
    </location>
    <ligand>
        <name>S-adenosyl-L-methionine</name>
        <dbReference type="ChEBI" id="CHEBI:59789"/>
    </ligand>
</feature>
<feature type="binding site" evidence="1">
    <location>
        <begin position="132"/>
        <end position="137"/>
    </location>
    <ligand>
        <name>S-adenosyl-L-methionine</name>
        <dbReference type="ChEBI" id="CHEBI:59789"/>
    </ligand>
</feature>
<protein>
    <recommendedName>
        <fullName evidence="1">tRNA (guanine-N(1)-)-methyltransferase</fullName>
        <ecNumber evidence="1">2.1.1.228</ecNumber>
    </recommendedName>
    <alternativeName>
        <fullName evidence="1">M1G-methyltransferase</fullName>
    </alternativeName>
    <alternativeName>
        <fullName evidence="1">tRNA [GM37] methyltransferase</fullName>
    </alternativeName>
</protein>
<proteinExistence type="inferred from homology"/>
<organism>
    <name type="scientific">Anaplasma marginale (strain Florida)</name>
    <dbReference type="NCBI Taxonomy" id="320483"/>
    <lineage>
        <taxon>Bacteria</taxon>
        <taxon>Pseudomonadati</taxon>
        <taxon>Pseudomonadota</taxon>
        <taxon>Alphaproteobacteria</taxon>
        <taxon>Rickettsiales</taxon>
        <taxon>Anaplasmataceae</taxon>
        <taxon>Anaplasma</taxon>
    </lineage>
</organism>
<gene>
    <name evidence="1" type="primary">trmD</name>
    <name type="ordered locus">AMF_958</name>
</gene>
<reference key="1">
    <citation type="journal article" date="2009" name="BMC Genomics">
        <title>Conservation in the face of diversity: multistrain analysis of an intracellular bacterium.</title>
        <authorList>
            <person name="Dark M.J."/>
            <person name="Herndon D.R."/>
            <person name="Kappmeyer L.S."/>
            <person name="Gonzales M.P."/>
            <person name="Nordeen E."/>
            <person name="Palmer G.H."/>
            <person name="Knowles D.P. Jr."/>
            <person name="Brayton K.A."/>
        </authorList>
    </citation>
    <scope>NUCLEOTIDE SEQUENCE [LARGE SCALE GENOMIC DNA]</scope>
    <source>
        <strain>Florida</strain>
    </source>
</reference>
<name>TRMD_ANAMF</name>
<sequence length="235" mass="26120">MIFNVLTIFPDMFPGPLGYSTVGNALRKGLWSLNVVDIRSFASDKHSTVDDKPYGGGPGMLMKADVLGRCIDSVLEAHPDTRLVYTSPKGKQFTQDMSRQIVHFGNITLLCGRFEGIDERVVDVYNFQEVSIGDYVISGGELAAMVVIDSCVRMVTGVIGNKDSLTRESFDCGLEYPQYTRPASWKGVSVPDVLLRGNHKETELWRCKMSRIITERRRPDLLKDCGGEEEGSSNE</sequence>
<accession>B9KH73</accession>
<keyword id="KW-0963">Cytoplasm</keyword>
<keyword id="KW-0489">Methyltransferase</keyword>
<keyword id="KW-1185">Reference proteome</keyword>
<keyword id="KW-0949">S-adenosyl-L-methionine</keyword>
<keyword id="KW-0808">Transferase</keyword>
<keyword id="KW-0819">tRNA processing</keyword>